<comment type="function">
    <text evidence="1">As part of the MCIA complex, involved in the assembly of the mitochondrial complex I.</text>
</comment>
<comment type="subunit">
    <text evidence="1">Part of the mitochondrial complex I assembly/MCIA complex that comprises at least the core subunits TMEM126B, NDUFAF1, ECSIT and ACAD9 and complement subunits such as COA1 and TMEM186. Interacts with ECSIT. Interacts with ACAD9. At early stages of complex I assembly, it is found in intermediate subcomplexes that contain different subunits including NDUFB6, NDUFA6, NDUFA9, NDUFS3, NDUFS7, ND1, ND2 and ND3. Interacts with TMEM70 and TMEM242 (By similarity).</text>
</comment>
<comment type="subcellular location">
    <subcellularLocation>
        <location evidence="1">Mitochondrion</location>
    </subcellularLocation>
    <subcellularLocation>
        <location evidence="1">Mitochondrion matrix</location>
    </subcellularLocation>
    <text evidence="1">Periferally associated with the matrix face of the mitochondrial inner membrane.</text>
</comment>
<comment type="similarity">
    <text evidence="4">Belongs to the CIA30 family.</text>
</comment>
<comment type="sequence caution" evidence="4">
    <conflict type="erroneous initiation">
        <sequence resource="EMBL-CDS" id="BAB26855"/>
    </conflict>
</comment>
<comment type="sequence caution" evidence="4">
    <conflict type="erroneous initiation">
        <sequence resource="EMBL-CDS" id="BAC34201"/>
    </conflict>
</comment>
<evidence type="ECO:0000250" key="1">
    <source>
        <dbReference type="UniProtKB" id="Q9Y375"/>
    </source>
</evidence>
<evidence type="ECO:0000255" key="2"/>
<evidence type="ECO:0000256" key="3">
    <source>
        <dbReference type="SAM" id="MobiDB-lite"/>
    </source>
</evidence>
<evidence type="ECO:0000305" key="4"/>
<evidence type="ECO:0000312" key="5">
    <source>
        <dbReference type="MGI" id="MGI:1916952"/>
    </source>
</evidence>
<sequence length="328" mass="37810">MSSIHKLLTGIYIHKNFLRPRAALPPFVGNHCVDYSSSSLQKKVTSVDRASQQGKTEEGLQGHDHKEVALDAPSPDRTPEVSFDKAIRDEAIEHFRRLKDEIVAHLRGPDGRPLQEVIMEQARVVWQFREKEDLDKWIVTSDKTIGGRSEIFLKMSKNNRSALLYGTLSSEPPQDGDSRQSGYCAMISRIPRGAFERKLSYDWSQFNTLYLRVRGDGRPWMVNIRQDTEFIQRKNQMYSYFMFTRGGPYWQEVKIPFSKFFFSNQGRVRDVQGPLVLDKISSIGFTLSDKVDGPFFLEIDFIGVFTDPAHTEEFAYENSPVLNPRLFR</sequence>
<gene>
    <name evidence="5" type="primary">Ndufaf1</name>
    <name type="synonym">Cia30</name>
</gene>
<feature type="transit peptide" description="Mitochondrion" evidence="2">
    <location>
        <begin position="1"/>
        <end position="24"/>
    </location>
</feature>
<feature type="chain" id="PRO_0000005465" description="Complex I intermediate-associated protein 30, mitochondrial">
    <location>
        <begin position="25"/>
        <end position="328"/>
    </location>
</feature>
<feature type="region of interest" description="Disordered" evidence="3">
    <location>
        <begin position="44"/>
        <end position="80"/>
    </location>
</feature>
<feature type="compositionally biased region" description="Polar residues" evidence="3">
    <location>
        <begin position="44"/>
        <end position="54"/>
    </location>
</feature>
<feature type="compositionally biased region" description="Basic and acidic residues" evidence="3">
    <location>
        <begin position="55"/>
        <end position="69"/>
    </location>
</feature>
<feature type="modified residue" description="Phosphoserine" evidence="1">
    <location>
        <position position="319"/>
    </location>
</feature>
<feature type="sequence conflict" description="In Ref. 1; BAC34201/BAB26855." evidence="4" ref="1">
    <original>N</original>
    <variation>S</variation>
    <location>
        <position position="30"/>
    </location>
</feature>
<feature type="sequence conflict" description="In Ref. 1; BAB26855." evidence="4" ref="1">
    <original>L</original>
    <variation>F</variation>
    <location>
        <position position="134"/>
    </location>
</feature>
<accession>Q9CWX2</accession>
<accession>Q8VEI8</accession>
<proteinExistence type="evidence at protein level"/>
<dbReference type="EMBL" id="AK010328">
    <property type="protein sequence ID" value="BAB26855.2"/>
    <property type="status" value="ALT_INIT"/>
    <property type="molecule type" value="mRNA"/>
</dbReference>
<dbReference type="EMBL" id="AK050343">
    <property type="protein sequence ID" value="BAC34201.1"/>
    <property type="status" value="ALT_INIT"/>
    <property type="molecule type" value="mRNA"/>
</dbReference>
<dbReference type="EMBL" id="BC018422">
    <property type="protein sequence ID" value="AAH18422.1"/>
    <property type="molecule type" value="mRNA"/>
</dbReference>
<dbReference type="CCDS" id="CCDS38207.1"/>
<dbReference type="RefSeq" id="NP_081451.3">
    <property type="nucleotide sequence ID" value="NM_027175.3"/>
</dbReference>
<dbReference type="RefSeq" id="XP_006500211.1">
    <property type="nucleotide sequence ID" value="XM_006500148.1"/>
</dbReference>
<dbReference type="RefSeq" id="XP_006500212.1">
    <property type="nucleotide sequence ID" value="XM_006500149.3"/>
</dbReference>
<dbReference type="SMR" id="Q9CWX2"/>
<dbReference type="BioGRID" id="213626">
    <property type="interactions" value="4"/>
</dbReference>
<dbReference type="DIP" id="DIP-59193N"/>
<dbReference type="FunCoup" id="Q9CWX2">
    <property type="interactions" value="1458"/>
</dbReference>
<dbReference type="IntAct" id="Q9CWX2">
    <property type="interactions" value="1"/>
</dbReference>
<dbReference type="STRING" id="10090.ENSMUSP00000028768"/>
<dbReference type="PhosphoSitePlus" id="Q9CWX2"/>
<dbReference type="jPOST" id="Q9CWX2"/>
<dbReference type="PaxDb" id="10090-ENSMUSP00000028768"/>
<dbReference type="ProteomicsDB" id="283621"/>
<dbReference type="Pumba" id="Q9CWX2"/>
<dbReference type="DNASU" id="69702"/>
<dbReference type="GeneID" id="69702"/>
<dbReference type="KEGG" id="mmu:69702"/>
<dbReference type="AGR" id="MGI:1916952"/>
<dbReference type="CTD" id="51103"/>
<dbReference type="MGI" id="MGI:1916952">
    <property type="gene designation" value="Ndufaf1"/>
</dbReference>
<dbReference type="eggNOG" id="KOG2435">
    <property type="taxonomic scope" value="Eukaryota"/>
</dbReference>
<dbReference type="InParanoid" id="Q9CWX2"/>
<dbReference type="OrthoDB" id="42561at2759"/>
<dbReference type="PhylomeDB" id="Q9CWX2"/>
<dbReference type="TreeFam" id="TF314819"/>
<dbReference type="Reactome" id="R-MMU-6799198">
    <property type="pathway name" value="Complex I biogenesis"/>
</dbReference>
<dbReference type="BioGRID-ORCS" id="69702">
    <property type="hits" value="18 hits in 80 CRISPR screens"/>
</dbReference>
<dbReference type="PRO" id="PR:Q9CWX2"/>
<dbReference type="Proteomes" id="UP000000589">
    <property type="component" value="Unplaced"/>
</dbReference>
<dbReference type="RNAct" id="Q9CWX2">
    <property type="molecule type" value="protein"/>
</dbReference>
<dbReference type="GO" id="GO:0005759">
    <property type="term" value="C:mitochondrial matrix"/>
    <property type="evidence" value="ECO:0007669"/>
    <property type="project" value="UniProtKB-SubCell"/>
</dbReference>
<dbReference type="GO" id="GO:0005739">
    <property type="term" value="C:mitochondrion"/>
    <property type="evidence" value="ECO:0007005"/>
    <property type="project" value="MGI"/>
</dbReference>
<dbReference type="GO" id="GO:0032981">
    <property type="term" value="P:mitochondrial respiratory chain complex I assembly"/>
    <property type="evidence" value="ECO:0000250"/>
    <property type="project" value="UniProtKB"/>
</dbReference>
<dbReference type="Gene3D" id="2.60.120.430">
    <property type="entry name" value="Galactose-binding lectin"/>
    <property type="match status" value="1"/>
</dbReference>
<dbReference type="InterPro" id="IPR008979">
    <property type="entry name" value="Galactose-bd-like_sf"/>
</dbReference>
<dbReference type="InterPro" id="IPR013857">
    <property type="entry name" value="NADH-UbQ_OxRdtase-assoc_prot30"/>
</dbReference>
<dbReference type="InterPro" id="IPR039131">
    <property type="entry name" value="NDUFAF1"/>
</dbReference>
<dbReference type="PANTHER" id="PTHR13194">
    <property type="entry name" value="COMPLEX I INTERMEDIATE-ASSOCIATED PROTEIN 30"/>
    <property type="match status" value="1"/>
</dbReference>
<dbReference type="PANTHER" id="PTHR13194:SF18">
    <property type="entry name" value="COMPLEX I INTERMEDIATE-ASSOCIATED PROTEIN 30, MITOCHONDRIAL"/>
    <property type="match status" value="1"/>
</dbReference>
<dbReference type="Pfam" id="PF08547">
    <property type="entry name" value="CIA30"/>
    <property type="match status" value="1"/>
</dbReference>
<dbReference type="SUPFAM" id="SSF49785">
    <property type="entry name" value="Galactose-binding domain-like"/>
    <property type="match status" value="1"/>
</dbReference>
<reference key="1">
    <citation type="journal article" date="2005" name="Science">
        <title>The transcriptional landscape of the mammalian genome.</title>
        <authorList>
            <person name="Carninci P."/>
            <person name="Kasukawa T."/>
            <person name="Katayama S."/>
            <person name="Gough J."/>
            <person name="Frith M.C."/>
            <person name="Maeda N."/>
            <person name="Oyama R."/>
            <person name="Ravasi T."/>
            <person name="Lenhard B."/>
            <person name="Wells C."/>
            <person name="Kodzius R."/>
            <person name="Shimokawa K."/>
            <person name="Bajic V.B."/>
            <person name="Brenner S.E."/>
            <person name="Batalov S."/>
            <person name="Forrest A.R."/>
            <person name="Zavolan M."/>
            <person name="Davis M.J."/>
            <person name="Wilming L.G."/>
            <person name="Aidinis V."/>
            <person name="Allen J.E."/>
            <person name="Ambesi-Impiombato A."/>
            <person name="Apweiler R."/>
            <person name="Aturaliya R.N."/>
            <person name="Bailey T.L."/>
            <person name="Bansal M."/>
            <person name="Baxter L."/>
            <person name="Beisel K.W."/>
            <person name="Bersano T."/>
            <person name="Bono H."/>
            <person name="Chalk A.M."/>
            <person name="Chiu K.P."/>
            <person name="Choudhary V."/>
            <person name="Christoffels A."/>
            <person name="Clutterbuck D.R."/>
            <person name="Crowe M.L."/>
            <person name="Dalla E."/>
            <person name="Dalrymple B.P."/>
            <person name="de Bono B."/>
            <person name="Della Gatta G."/>
            <person name="di Bernardo D."/>
            <person name="Down T."/>
            <person name="Engstrom P."/>
            <person name="Fagiolini M."/>
            <person name="Faulkner G."/>
            <person name="Fletcher C.F."/>
            <person name="Fukushima T."/>
            <person name="Furuno M."/>
            <person name="Futaki S."/>
            <person name="Gariboldi M."/>
            <person name="Georgii-Hemming P."/>
            <person name="Gingeras T.R."/>
            <person name="Gojobori T."/>
            <person name="Green R.E."/>
            <person name="Gustincich S."/>
            <person name="Harbers M."/>
            <person name="Hayashi Y."/>
            <person name="Hensch T.K."/>
            <person name="Hirokawa N."/>
            <person name="Hill D."/>
            <person name="Huminiecki L."/>
            <person name="Iacono M."/>
            <person name="Ikeo K."/>
            <person name="Iwama A."/>
            <person name="Ishikawa T."/>
            <person name="Jakt M."/>
            <person name="Kanapin A."/>
            <person name="Katoh M."/>
            <person name="Kawasawa Y."/>
            <person name="Kelso J."/>
            <person name="Kitamura H."/>
            <person name="Kitano H."/>
            <person name="Kollias G."/>
            <person name="Krishnan S.P."/>
            <person name="Kruger A."/>
            <person name="Kummerfeld S.K."/>
            <person name="Kurochkin I.V."/>
            <person name="Lareau L.F."/>
            <person name="Lazarevic D."/>
            <person name="Lipovich L."/>
            <person name="Liu J."/>
            <person name="Liuni S."/>
            <person name="McWilliam S."/>
            <person name="Madan Babu M."/>
            <person name="Madera M."/>
            <person name="Marchionni L."/>
            <person name="Matsuda H."/>
            <person name="Matsuzawa S."/>
            <person name="Miki H."/>
            <person name="Mignone F."/>
            <person name="Miyake S."/>
            <person name="Morris K."/>
            <person name="Mottagui-Tabar S."/>
            <person name="Mulder N."/>
            <person name="Nakano N."/>
            <person name="Nakauchi H."/>
            <person name="Ng P."/>
            <person name="Nilsson R."/>
            <person name="Nishiguchi S."/>
            <person name="Nishikawa S."/>
            <person name="Nori F."/>
            <person name="Ohara O."/>
            <person name="Okazaki Y."/>
            <person name="Orlando V."/>
            <person name="Pang K.C."/>
            <person name="Pavan W.J."/>
            <person name="Pavesi G."/>
            <person name="Pesole G."/>
            <person name="Petrovsky N."/>
            <person name="Piazza S."/>
            <person name="Reed J."/>
            <person name="Reid J.F."/>
            <person name="Ring B.Z."/>
            <person name="Ringwald M."/>
            <person name="Rost B."/>
            <person name="Ruan Y."/>
            <person name="Salzberg S.L."/>
            <person name="Sandelin A."/>
            <person name="Schneider C."/>
            <person name="Schoenbach C."/>
            <person name="Sekiguchi K."/>
            <person name="Semple C.A."/>
            <person name="Seno S."/>
            <person name="Sessa L."/>
            <person name="Sheng Y."/>
            <person name="Shibata Y."/>
            <person name="Shimada H."/>
            <person name="Shimada K."/>
            <person name="Silva D."/>
            <person name="Sinclair B."/>
            <person name="Sperling S."/>
            <person name="Stupka E."/>
            <person name="Sugiura K."/>
            <person name="Sultana R."/>
            <person name="Takenaka Y."/>
            <person name="Taki K."/>
            <person name="Tammoja K."/>
            <person name="Tan S.L."/>
            <person name="Tang S."/>
            <person name="Taylor M.S."/>
            <person name="Tegner J."/>
            <person name="Teichmann S.A."/>
            <person name="Ueda H.R."/>
            <person name="van Nimwegen E."/>
            <person name="Verardo R."/>
            <person name="Wei C.L."/>
            <person name="Yagi K."/>
            <person name="Yamanishi H."/>
            <person name="Zabarovsky E."/>
            <person name="Zhu S."/>
            <person name="Zimmer A."/>
            <person name="Hide W."/>
            <person name="Bult C."/>
            <person name="Grimmond S.M."/>
            <person name="Teasdale R.D."/>
            <person name="Liu E.T."/>
            <person name="Brusic V."/>
            <person name="Quackenbush J."/>
            <person name="Wahlestedt C."/>
            <person name="Mattick J.S."/>
            <person name="Hume D.A."/>
            <person name="Kai C."/>
            <person name="Sasaki D."/>
            <person name="Tomaru Y."/>
            <person name="Fukuda S."/>
            <person name="Kanamori-Katayama M."/>
            <person name="Suzuki M."/>
            <person name="Aoki J."/>
            <person name="Arakawa T."/>
            <person name="Iida J."/>
            <person name="Imamura K."/>
            <person name="Itoh M."/>
            <person name="Kato T."/>
            <person name="Kawaji H."/>
            <person name="Kawagashira N."/>
            <person name="Kawashima T."/>
            <person name="Kojima M."/>
            <person name="Kondo S."/>
            <person name="Konno H."/>
            <person name="Nakano K."/>
            <person name="Ninomiya N."/>
            <person name="Nishio T."/>
            <person name="Okada M."/>
            <person name="Plessy C."/>
            <person name="Shibata K."/>
            <person name="Shiraki T."/>
            <person name="Suzuki S."/>
            <person name="Tagami M."/>
            <person name="Waki K."/>
            <person name="Watahiki A."/>
            <person name="Okamura-Oho Y."/>
            <person name="Suzuki H."/>
            <person name="Kawai J."/>
            <person name="Hayashizaki Y."/>
        </authorList>
    </citation>
    <scope>NUCLEOTIDE SEQUENCE [LARGE SCALE MRNA]</scope>
    <source>
        <strain>C57BL/6J</strain>
        <tissue>Embryonic stem cell</tissue>
    </source>
</reference>
<reference key="2">
    <citation type="journal article" date="2004" name="Genome Res.">
        <title>The status, quality, and expansion of the NIH full-length cDNA project: the Mammalian Gene Collection (MGC).</title>
        <authorList>
            <consortium name="The MGC Project Team"/>
        </authorList>
    </citation>
    <scope>NUCLEOTIDE SEQUENCE [LARGE SCALE MRNA]</scope>
    <source>
        <tissue>Mammary gland</tissue>
    </source>
</reference>
<reference key="3">
    <citation type="journal article" date="2010" name="Cell">
        <title>A tissue-specific atlas of mouse protein phosphorylation and expression.</title>
        <authorList>
            <person name="Huttlin E.L."/>
            <person name="Jedrychowski M.P."/>
            <person name="Elias J.E."/>
            <person name="Goswami T."/>
            <person name="Rad R."/>
            <person name="Beausoleil S.A."/>
            <person name="Villen J."/>
            <person name="Haas W."/>
            <person name="Sowa M.E."/>
            <person name="Gygi S.P."/>
        </authorList>
    </citation>
    <scope>IDENTIFICATION BY MASS SPECTROMETRY [LARGE SCALE ANALYSIS]</scope>
    <source>
        <tissue>Brown adipose tissue</tissue>
        <tissue>Heart</tissue>
    </source>
</reference>
<name>CIA30_MOUSE</name>
<organism>
    <name type="scientific">Mus musculus</name>
    <name type="common">Mouse</name>
    <dbReference type="NCBI Taxonomy" id="10090"/>
    <lineage>
        <taxon>Eukaryota</taxon>
        <taxon>Metazoa</taxon>
        <taxon>Chordata</taxon>
        <taxon>Craniata</taxon>
        <taxon>Vertebrata</taxon>
        <taxon>Euteleostomi</taxon>
        <taxon>Mammalia</taxon>
        <taxon>Eutheria</taxon>
        <taxon>Euarchontoglires</taxon>
        <taxon>Glires</taxon>
        <taxon>Rodentia</taxon>
        <taxon>Myomorpha</taxon>
        <taxon>Muroidea</taxon>
        <taxon>Muridae</taxon>
        <taxon>Murinae</taxon>
        <taxon>Mus</taxon>
        <taxon>Mus</taxon>
    </lineage>
</organism>
<keyword id="KW-0143">Chaperone</keyword>
<keyword id="KW-0496">Mitochondrion</keyword>
<keyword id="KW-0597">Phosphoprotein</keyword>
<keyword id="KW-1185">Reference proteome</keyword>
<keyword id="KW-0809">Transit peptide</keyword>
<protein>
    <recommendedName>
        <fullName evidence="4">Complex I intermediate-associated protein 30, mitochondrial</fullName>
    </recommendedName>
    <alternativeName>
        <fullName>NADH dehydrogenase [ubiquinone] 1 alpha subcomplex assembly factor 1</fullName>
    </alternativeName>
</protein>